<feature type="chain" id="PRO_1000059298" description="NAD-capped RNA hydrolase NudC">
    <location>
        <begin position="1"/>
        <end position="260"/>
    </location>
</feature>
<feature type="domain" description="Nudix hydrolase" evidence="1">
    <location>
        <begin position="125"/>
        <end position="248"/>
    </location>
</feature>
<feature type="short sequence motif" description="Nudix box" evidence="1">
    <location>
        <begin position="159"/>
        <end position="180"/>
    </location>
</feature>
<feature type="binding site" evidence="1">
    <location>
        <position position="25"/>
    </location>
    <ligand>
        <name>substrate</name>
    </ligand>
</feature>
<feature type="binding site" evidence="1">
    <location>
        <position position="69"/>
    </location>
    <ligand>
        <name>substrate</name>
    </ligand>
</feature>
<feature type="binding site" evidence="1">
    <location>
        <position position="98"/>
    </location>
    <ligand>
        <name>Zn(2+)</name>
        <dbReference type="ChEBI" id="CHEBI:29105"/>
    </ligand>
</feature>
<feature type="binding site" evidence="1">
    <location>
        <position position="101"/>
    </location>
    <ligand>
        <name>Zn(2+)</name>
        <dbReference type="ChEBI" id="CHEBI:29105"/>
    </ligand>
</feature>
<feature type="binding site" evidence="1">
    <location>
        <position position="111"/>
    </location>
    <ligand>
        <name>substrate</name>
    </ligand>
</feature>
<feature type="binding site" evidence="1">
    <location>
        <position position="116"/>
    </location>
    <ligand>
        <name>Zn(2+)</name>
        <dbReference type="ChEBI" id="CHEBI:29105"/>
    </ligand>
</feature>
<feature type="binding site" evidence="1">
    <location>
        <position position="119"/>
    </location>
    <ligand>
        <name>Zn(2+)</name>
        <dbReference type="ChEBI" id="CHEBI:29105"/>
    </ligand>
</feature>
<feature type="binding site" evidence="1">
    <location>
        <position position="124"/>
    </location>
    <ligand>
        <name>substrate</name>
    </ligand>
</feature>
<feature type="binding site" evidence="1">
    <location>
        <position position="158"/>
    </location>
    <ligand>
        <name>a divalent metal cation</name>
        <dbReference type="ChEBI" id="CHEBI:60240"/>
        <label>1</label>
    </ligand>
</feature>
<feature type="binding site" evidence="1">
    <location>
        <position position="174"/>
    </location>
    <ligand>
        <name>a divalent metal cation</name>
        <dbReference type="ChEBI" id="CHEBI:60240"/>
        <label>2</label>
    </ligand>
</feature>
<feature type="binding site" evidence="1">
    <location>
        <position position="174"/>
    </location>
    <ligand>
        <name>a divalent metal cation</name>
        <dbReference type="ChEBI" id="CHEBI:60240"/>
        <label>3</label>
    </ligand>
</feature>
<feature type="binding site" evidence="1">
    <location>
        <position position="178"/>
    </location>
    <ligand>
        <name>a divalent metal cation</name>
        <dbReference type="ChEBI" id="CHEBI:60240"/>
        <label>1</label>
    </ligand>
</feature>
<feature type="binding site" evidence="1">
    <location>
        <position position="178"/>
    </location>
    <ligand>
        <name>a divalent metal cation</name>
        <dbReference type="ChEBI" id="CHEBI:60240"/>
        <label>3</label>
    </ligand>
</feature>
<feature type="binding site" evidence="1">
    <location>
        <begin position="192"/>
        <end position="199"/>
    </location>
    <ligand>
        <name>substrate</name>
    </ligand>
</feature>
<feature type="binding site" evidence="1">
    <location>
        <position position="219"/>
    </location>
    <ligand>
        <name>a divalent metal cation</name>
        <dbReference type="ChEBI" id="CHEBI:60240"/>
        <label>1</label>
    </ligand>
</feature>
<feature type="binding site" evidence="1">
    <location>
        <position position="219"/>
    </location>
    <ligand>
        <name>a divalent metal cation</name>
        <dbReference type="ChEBI" id="CHEBI:60240"/>
        <label>3</label>
    </ligand>
</feature>
<feature type="binding site" evidence="1">
    <location>
        <position position="241"/>
    </location>
    <ligand>
        <name>substrate</name>
    </ligand>
</feature>
<protein>
    <recommendedName>
        <fullName evidence="1">NAD-capped RNA hydrolase NudC</fullName>
        <shortName evidence="1">DeNADding enzyme NudC</shortName>
        <ecNumber evidence="1">3.6.1.-</ecNumber>
    </recommendedName>
    <alternativeName>
        <fullName evidence="1">NADH pyrophosphatase</fullName>
        <ecNumber evidence="1">3.6.1.22</ecNumber>
    </alternativeName>
</protein>
<gene>
    <name evidence="1" type="primary">nudC</name>
    <name type="ordered locus">YpsIP31758_3851</name>
</gene>
<sequence>MELQLTGKESGWWIVSHENKLWLPKGELPQGNAANWSLQGATARQIGEWQGQPVWLIRQMMPSGMGSVRQLLDVDRGLFQLAGRGVQLAEFYRSHRFCGYCGHEMHASRTEWASLCNHCRERYYPQIAPCVIVAIRRGDEILLAQHVRHRGGINTVLAGFVEVGETLEQAVSREVLEESNIHIKNLRYVTSQPWPFPHSLMMAFMADYDSGELCHDPKELLNAGWYRYDQLPLLPPPGTVARRLIEDTVVLCREHSDLSQ</sequence>
<name>NUDC_YERP3</name>
<evidence type="ECO:0000255" key="1">
    <source>
        <dbReference type="HAMAP-Rule" id="MF_00297"/>
    </source>
</evidence>
<organism>
    <name type="scientific">Yersinia pseudotuberculosis serotype O:1b (strain IP 31758)</name>
    <dbReference type="NCBI Taxonomy" id="349747"/>
    <lineage>
        <taxon>Bacteria</taxon>
        <taxon>Pseudomonadati</taxon>
        <taxon>Pseudomonadota</taxon>
        <taxon>Gammaproteobacteria</taxon>
        <taxon>Enterobacterales</taxon>
        <taxon>Yersiniaceae</taxon>
        <taxon>Yersinia</taxon>
    </lineage>
</organism>
<reference key="1">
    <citation type="journal article" date="2007" name="PLoS Genet.">
        <title>The complete genome sequence of Yersinia pseudotuberculosis IP31758, the causative agent of Far East scarlet-like fever.</title>
        <authorList>
            <person name="Eppinger M."/>
            <person name="Rosovitz M.J."/>
            <person name="Fricke W.F."/>
            <person name="Rasko D.A."/>
            <person name="Kokorina G."/>
            <person name="Fayolle C."/>
            <person name="Lindler L.E."/>
            <person name="Carniel E."/>
            <person name="Ravel J."/>
        </authorList>
    </citation>
    <scope>NUCLEOTIDE SEQUENCE [LARGE SCALE GENOMIC DNA]</scope>
    <source>
        <strain>IP 31758</strain>
    </source>
</reference>
<accession>A7FNH4</accession>
<keyword id="KW-0378">Hydrolase</keyword>
<keyword id="KW-0460">Magnesium</keyword>
<keyword id="KW-0464">Manganese</keyword>
<keyword id="KW-0479">Metal-binding</keyword>
<keyword id="KW-0520">NAD</keyword>
<keyword id="KW-0862">Zinc</keyword>
<proteinExistence type="inferred from homology"/>
<comment type="function">
    <text evidence="1">mRNA decapping enzyme that specifically removes the nicotinamide adenine dinucleotide (NAD) cap from a subset of mRNAs by hydrolyzing the diphosphate linkage to produce nicotinamide mononucleotide (NMN) and 5' monophosphate mRNA. The NAD-cap is present at the 5'-end of some mRNAs and stabilizes RNA against 5'-processing. Has preference for mRNAs with a 5'-end purine. Catalyzes the hydrolysis of a broad range of dinucleotide pyrophosphates.</text>
</comment>
<comment type="catalytic activity">
    <reaction evidence="1">
        <text>a 5'-end NAD(+)-phospho-ribonucleoside in mRNA + H2O = a 5'-end phospho-adenosine-phospho-ribonucleoside in mRNA + beta-nicotinamide D-ribonucleotide + 2 H(+)</text>
        <dbReference type="Rhea" id="RHEA:60876"/>
        <dbReference type="Rhea" id="RHEA-COMP:15698"/>
        <dbReference type="Rhea" id="RHEA-COMP:15719"/>
        <dbReference type="ChEBI" id="CHEBI:14649"/>
        <dbReference type="ChEBI" id="CHEBI:15377"/>
        <dbReference type="ChEBI" id="CHEBI:15378"/>
        <dbReference type="ChEBI" id="CHEBI:144029"/>
        <dbReference type="ChEBI" id="CHEBI:144051"/>
    </reaction>
    <physiologicalReaction direction="left-to-right" evidence="1">
        <dbReference type="Rhea" id="RHEA:60877"/>
    </physiologicalReaction>
</comment>
<comment type="catalytic activity">
    <reaction evidence="1">
        <text>NAD(+) + H2O = beta-nicotinamide D-ribonucleotide + AMP + 2 H(+)</text>
        <dbReference type="Rhea" id="RHEA:11800"/>
        <dbReference type="ChEBI" id="CHEBI:14649"/>
        <dbReference type="ChEBI" id="CHEBI:15377"/>
        <dbReference type="ChEBI" id="CHEBI:15378"/>
        <dbReference type="ChEBI" id="CHEBI:57540"/>
        <dbReference type="ChEBI" id="CHEBI:456215"/>
        <dbReference type="EC" id="3.6.1.22"/>
    </reaction>
</comment>
<comment type="catalytic activity">
    <reaction evidence="1">
        <text>NADH + H2O = reduced beta-nicotinamide D-ribonucleotide + AMP + 2 H(+)</text>
        <dbReference type="Rhea" id="RHEA:48868"/>
        <dbReference type="ChEBI" id="CHEBI:15377"/>
        <dbReference type="ChEBI" id="CHEBI:15378"/>
        <dbReference type="ChEBI" id="CHEBI:57945"/>
        <dbReference type="ChEBI" id="CHEBI:90832"/>
        <dbReference type="ChEBI" id="CHEBI:456215"/>
        <dbReference type="EC" id="3.6.1.22"/>
    </reaction>
</comment>
<comment type="cofactor">
    <cofactor evidence="1">
        <name>Mg(2+)</name>
        <dbReference type="ChEBI" id="CHEBI:18420"/>
    </cofactor>
    <cofactor evidence="1">
        <name>Mn(2+)</name>
        <dbReference type="ChEBI" id="CHEBI:29035"/>
    </cofactor>
    <text evidence="1">Divalent metal cations. Mg(2+) or Mn(2+).</text>
</comment>
<comment type="cofactor">
    <cofactor evidence="1">
        <name>Zn(2+)</name>
        <dbReference type="ChEBI" id="CHEBI:29105"/>
    </cofactor>
    <text evidence="1">Binds 1 zinc ion per subunit.</text>
</comment>
<comment type="subunit">
    <text evidence="1">Homodimer.</text>
</comment>
<comment type="similarity">
    <text evidence="1">Belongs to the Nudix hydrolase family. NudC subfamily.</text>
</comment>
<dbReference type="EC" id="3.6.1.-" evidence="1"/>
<dbReference type="EC" id="3.6.1.22" evidence="1"/>
<dbReference type="EMBL" id="CP000720">
    <property type="protein sequence ID" value="ABS47660.1"/>
    <property type="molecule type" value="Genomic_DNA"/>
</dbReference>
<dbReference type="RefSeq" id="WP_011191554.1">
    <property type="nucleotide sequence ID" value="NC_009708.1"/>
</dbReference>
<dbReference type="SMR" id="A7FNH4"/>
<dbReference type="GeneID" id="49787716"/>
<dbReference type="KEGG" id="ypi:YpsIP31758_3851"/>
<dbReference type="HOGENOM" id="CLU_037162_0_1_6"/>
<dbReference type="Proteomes" id="UP000002412">
    <property type="component" value="Chromosome"/>
</dbReference>
<dbReference type="GO" id="GO:0005829">
    <property type="term" value="C:cytosol"/>
    <property type="evidence" value="ECO:0007669"/>
    <property type="project" value="TreeGrafter"/>
</dbReference>
<dbReference type="GO" id="GO:0000287">
    <property type="term" value="F:magnesium ion binding"/>
    <property type="evidence" value="ECO:0007669"/>
    <property type="project" value="UniProtKB-UniRule"/>
</dbReference>
<dbReference type="GO" id="GO:0030145">
    <property type="term" value="F:manganese ion binding"/>
    <property type="evidence" value="ECO:0007669"/>
    <property type="project" value="UniProtKB-UniRule"/>
</dbReference>
<dbReference type="GO" id="GO:0000210">
    <property type="term" value="F:NAD+ diphosphatase activity"/>
    <property type="evidence" value="ECO:0007669"/>
    <property type="project" value="UniProtKB-UniRule"/>
</dbReference>
<dbReference type="GO" id="GO:0035529">
    <property type="term" value="F:NADH pyrophosphatase activity"/>
    <property type="evidence" value="ECO:0007669"/>
    <property type="project" value="TreeGrafter"/>
</dbReference>
<dbReference type="GO" id="GO:0110153">
    <property type="term" value="F:RNA NAD-cap (NMN-forming) hydrolase activity"/>
    <property type="evidence" value="ECO:0007669"/>
    <property type="project" value="RHEA"/>
</dbReference>
<dbReference type="GO" id="GO:0008270">
    <property type="term" value="F:zinc ion binding"/>
    <property type="evidence" value="ECO:0007669"/>
    <property type="project" value="UniProtKB-UniRule"/>
</dbReference>
<dbReference type="GO" id="GO:0019677">
    <property type="term" value="P:NAD catabolic process"/>
    <property type="evidence" value="ECO:0007669"/>
    <property type="project" value="TreeGrafter"/>
</dbReference>
<dbReference type="GO" id="GO:0006734">
    <property type="term" value="P:NADH metabolic process"/>
    <property type="evidence" value="ECO:0007669"/>
    <property type="project" value="TreeGrafter"/>
</dbReference>
<dbReference type="GO" id="GO:0006742">
    <property type="term" value="P:NADP catabolic process"/>
    <property type="evidence" value="ECO:0007669"/>
    <property type="project" value="TreeGrafter"/>
</dbReference>
<dbReference type="CDD" id="cd03429">
    <property type="entry name" value="NUDIX_NADH_pyrophosphatase_Nudt13"/>
    <property type="match status" value="1"/>
</dbReference>
<dbReference type="FunFam" id="3.90.79.10:FF:000004">
    <property type="entry name" value="NADH pyrophosphatase"/>
    <property type="match status" value="1"/>
</dbReference>
<dbReference type="FunFam" id="3.90.79.20:FF:000001">
    <property type="entry name" value="NADH pyrophosphatase"/>
    <property type="match status" value="1"/>
</dbReference>
<dbReference type="Gene3D" id="3.90.79.20">
    <property type="match status" value="1"/>
</dbReference>
<dbReference type="Gene3D" id="3.90.79.10">
    <property type="entry name" value="Nucleoside Triphosphate Pyrophosphohydrolase"/>
    <property type="match status" value="1"/>
</dbReference>
<dbReference type="HAMAP" id="MF_00297">
    <property type="entry name" value="Nudix_NudC"/>
    <property type="match status" value="1"/>
</dbReference>
<dbReference type="InterPro" id="IPR050241">
    <property type="entry name" value="NAD-cap_RNA_hydrolase_NudC"/>
</dbReference>
<dbReference type="InterPro" id="IPR049734">
    <property type="entry name" value="NudC-like_C"/>
</dbReference>
<dbReference type="InterPro" id="IPR015797">
    <property type="entry name" value="NUDIX_hydrolase-like_dom_sf"/>
</dbReference>
<dbReference type="InterPro" id="IPR020084">
    <property type="entry name" value="NUDIX_hydrolase_CS"/>
</dbReference>
<dbReference type="InterPro" id="IPR000086">
    <property type="entry name" value="NUDIX_hydrolase_dom"/>
</dbReference>
<dbReference type="InterPro" id="IPR022925">
    <property type="entry name" value="RNA_Hydrolase_NudC"/>
</dbReference>
<dbReference type="InterPro" id="IPR015376">
    <property type="entry name" value="Znr_NADH_PPase"/>
</dbReference>
<dbReference type="NCBIfam" id="NF001299">
    <property type="entry name" value="PRK00241.1"/>
    <property type="match status" value="1"/>
</dbReference>
<dbReference type="PANTHER" id="PTHR42904:SF6">
    <property type="entry name" value="NAD-CAPPED RNA HYDROLASE NUDT12"/>
    <property type="match status" value="1"/>
</dbReference>
<dbReference type="PANTHER" id="PTHR42904">
    <property type="entry name" value="NUDIX HYDROLASE, NUDC SUBFAMILY"/>
    <property type="match status" value="1"/>
</dbReference>
<dbReference type="Pfam" id="PF00293">
    <property type="entry name" value="NUDIX"/>
    <property type="match status" value="1"/>
</dbReference>
<dbReference type="Pfam" id="PF09297">
    <property type="entry name" value="Zn_ribbon_NUD"/>
    <property type="match status" value="1"/>
</dbReference>
<dbReference type="SUPFAM" id="SSF55811">
    <property type="entry name" value="Nudix"/>
    <property type="match status" value="2"/>
</dbReference>
<dbReference type="PROSITE" id="PS51462">
    <property type="entry name" value="NUDIX"/>
    <property type="match status" value="1"/>
</dbReference>
<dbReference type="PROSITE" id="PS00893">
    <property type="entry name" value="NUDIX_BOX"/>
    <property type="match status" value="1"/>
</dbReference>